<feature type="chain" id="PRO_1000091526" description="Serine hydroxymethyltransferase">
    <location>
        <begin position="1"/>
        <end position="497"/>
    </location>
</feature>
<feature type="binding site" evidence="1">
    <location>
        <position position="176"/>
    </location>
    <ligand>
        <name>(6S)-5,6,7,8-tetrahydrofolate</name>
        <dbReference type="ChEBI" id="CHEBI:57453"/>
    </ligand>
</feature>
<feature type="binding site" evidence="1">
    <location>
        <begin position="180"/>
        <end position="182"/>
    </location>
    <ligand>
        <name>(6S)-5,6,7,8-tetrahydrofolate</name>
        <dbReference type="ChEBI" id="CHEBI:57453"/>
    </ligand>
</feature>
<feature type="site" description="Plays an important role in substrate specificity" evidence="1">
    <location>
        <position position="288"/>
    </location>
</feature>
<feature type="modified residue" description="N6-(pyridoxal phosphate)lysine" evidence="1">
    <location>
        <position position="289"/>
    </location>
</feature>
<accession>B0B804</accession>
<comment type="function">
    <text evidence="1">Catalyzes the reversible interconversion of serine and glycine with tetrahydrofolate (THF) serving as the one-carbon carrier. This reaction serves as the major source of one-carbon groups required for the biosynthesis of purines, thymidylate, methionine, and other important biomolecules. Also exhibits THF-independent aldolase activity toward beta-hydroxyamino acids, producing glycine and aldehydes, via a retro-aldol mechanism.</text>
</comment>
<comment type="catalytic activity">
    <reaction evidence="1">
        <text>(6R)-5,10-methylene-5,6,7,8-tetrahydrofolate + glycine + H2O = (6S)-5,6,7,8-tetrahydrofolate + L-serine</text>
        <dbReference type="Rhea" id="RHEA:15481"/>
        <dbReference type="ChEBI" id="CHEBI:15377"/>
        <dbReference type="ChEBI" id="CHEBI:15636"/>
        <dbReference type="ChEBI" id="CHEBI:33384"/>
        <dbReference type="ChEBI" id="CHEBI:57305"/>
        <dbReference type="ChEBI" id="CHEBI:57453"/>
        <dbReference type="EC" id="2.1.2.1"/>
    </reaction>
</comment>
<comment type="cofactor">
    <cofactor evidence="1">
        <name>pyridoxal 5'-phosphate</name>
        <dbReference type="ChEBI" id="CHEBI:597326"/>
    </cofactor>
</comment>
<comment type="pathway">
    <text evidence="1">One-carbon metabolism; tetrahydrofolate interconversion.</text>
</comment>
<comment type="pathway">
    <text evidence="1">Amino-acid biosynthesis; glycine biosynthesis; glycine from L-serine: step 1/1.</text>
</comment>
<comment type="subunit">
    <text evidence="1">Homodimer.</text>
</comment>
<comment type="subcellular location">
    <subcellularLocation>
        <location evidence="1">Cytoplasm</location>
    </subcellularLocation>
</comment>
<comment type="similarity">
    <text evidence="1">Belongs to the SHMT family.</text>
</comment>
<evidence type="ECO:0000255" key="1">
    <source>
        <dbReference type="HAMAP-Rule" id="MF_00051"/>
    </source>
</evidence>
<protein>
    <recommendedName>
        <fullName evidence="1">Serine hydroxymethyltransferase</fullName>
        <shortName evidence="1">SHMT</shortName>
        <shortName evidence="1">Serine methylase</shortName>
        <ecNumber evidence="1">2.1.2.1</ecNumber>
    </recommendedName>
</protein>
<reference key="1">
    <citation type="journal article" date="2008" name="Genome Res.">
        <title>Chlamydia trachomatis: genome sequence analysis of lymphogranuloma venereum isolates.</title>
        <authorList>
            <person name="Thomson N.R."/>
            <person name="Holden M.T.G."/>
            <person name="Carder C."/>
            <person name="Lennard N."/>
            <person name="Lockey S.J."/>
            <person name="Marsh P."/>
            <person name="Skipp P."/>
            <person name="O'Connor C.D."/>
            <person name="Goodhead I."/>
            <person name="Norbertzcak H."/>
            <person name="Harris B."/>
            <person name="Ormond D."/>
            <person name="Rance R."/>
            <person name="Quail M.A."/>
            <person name="Parkhill J."/>
            <person name="Stephens R.S."/>
            <person name="Clarke I.N."/>
        </authorList>
    </citation>
    <scope>NUCLEOTIDE SEQUENCE [LARGE SCALE GENOMIC DNA]</scope>
    <source>
        <strain>ATCC VR-902B / DSM 19102 / 434/Bu</strain>
    </source>
</reference>
<keyword id="KW-0028">Amino-acid biosynthesis</keyword>
<keyword id="KW-0963">Cytoplasm</keyword>
<keyword id="KW-0554">One-carbon metabolism</keyword>
<keyword id="KW-0663">Pyridoxal phosphate</keyword>
<keyword id="KW-0808">Transferase</keyword>
<dbReference type="EC" id="2.1.2.1" evidence="1"/>
<dbReference type="EMBL" id="AM884176">
    <property type="protein sequence ID" value="CAP04130.1"/>
    <property type="molecule type" value="Genomic_DNA"/>
</dbReference>
<dbReference type="RefSeq" id="WP_009873807.1">
    <property type="nucleotide sequence ID" value="NC_010287.1"/>
</dbReference>
<dbReference type="RefSeq" id="YP_001654763.1">
    <property type="nucleotide sequence ID" value="NC_010287.1"/>
</dbReference>
<dbReference type="SMR" id="B0B804"/>
<dbReference type="KEGG" id="ctb:CTL0691"/>
<dbReference type="PATRIC" id="fig|471472.4.peg.743"/>
<dbReference type="HOGENOM" id="CLU_022477_2_1_0"/>
<dbReference type="UniPathway" id="UPA00193"/>
<dbReference type="UniPathway" id="UPA00288">
    <property type="reaction ID" value="UER01023"/>
</dbReference>
<dbReference type="Proteomes" id="UP001154402">
    <property type="component" value="Chromosome"/>
</dbReference>
<dbReference type="GO" id="GO:0005829">
    <property type="term" value="C:cytosol"/>
    <property type="evidence" value="ECO:0007669"/>
    <property type="project" value="TreeGrafter"/>
</dbReference>
<dbReference type="GO" id="GO:0004372">
    <property type="term" value="F:glycine hydroxymethyltransferase activity"/>
    <property type="evidence" value="ECO:0007669"/>
    <property type="project" value="UniProtKB-UniRule"/>
</dbReference>
<dbReference type="GO" id="GO:0030170">
    <property type="term" value="F:pyridoxal phosphate binding"/>
    <property type="evidence" value="ECO:0007669"/>
    <property type="project" value="UniProtKB-UniRule"/>
</dbReference>
<dbReference type="GO" id="GO:0019264">
    <property type="term" value="P:glycine biosynthetic process from serine"/>
    <property type="evidence" value="ECO:0007669"/>
    <property type="project" value="UniProtKB-UniRule"/>
</dbReference>
<dbReference type="GO" id="GO:0035999">
    <property type="term" value="P:tetrahydrofolate interconversion"/>
    <property type="evidence" value="ECO:0007669"/>
    <property type="project" value="UniProtKB-UniRule"/>
</dbReference>
<dbReference type="CDD" id="cd00378">
    <property type="entry name" value="SHMT"/>
    <property type="match status" value="1"/>
</dbReference>
<dbReference type="FunFam" id="3.40.640.10:FF:000060">
    <property type="entry name" value="Serine hydroxymethyltransferase"/>
    <property type="match status" value="1"/>
</dbReference>
<dbReference type="Gene3D" id="3.90.1150.10">
    <property type="entry name" value="Aspartate Aminotransferase, domain 1"/>
    <property type="match status" value="1"/>
</dbReference>
<dbReference type="Gene3D" id="3.40.640.10">
    <property type="entry name" value="Type I PLP-dependent aspartate aminotransferase-like (Major domain)"/>
    <property type="match status" value="1"/>
</dbReference>
<dbReference type="HAMAP" id="MF_00051">
    <property type="entry name" value="SHMT"/>
    <property type="match status" value="1"/>
</dbReference>
<dbReference type="InterPro" id="IPR015424">
    <property type="entry name" value="PyrdxlP-dep_Trfase"/>
</dbReference>
<dbReference type="InterPro" id="IPR015421">
    <property type="entry name" value="PyrdxlP-dep_Trfase_major"/>
</dbReference>
<dbReference type="InterPro" id="IPR015422">
    <property type="entry name" value="PyrdxlP-dep_Trfase_small"/>
</dbReference>
<dbReference type="InterPro" id="IPR001085">
    <property type="entry name" value="Ser_HO-MeTrfase"/>
</dbReference>
<dbReference type="InterPro" id="IPR049943">
    <property type="entry name" value="Ser_HO-MeTrfase-like"/>
</dbReference>
<dbReference type="InterPro" id="IPR019798">
    <property type="entry name" value="Ser_HO-MeTrfase_PLP_BS"/>
</dbReference>
<dbReference type="InterPro" id="IPR039429">
    <property type="entry name" value="SHMT-like_dom"/>
</dbReference>
<dbReference type="NCBIfam" id="NF000586">
    <property type="entry name" value="PRK00011.1"/>
    <property type="match status" value="1"/>
</dbReference>
<dbReference type="NCBIfam" id="NF010094">
    <property type="entry name" value="PRK13580.1"/>
    <property type="match status" value="1"/>
</dbReference>
<dbReference type="PANTHER" id="PTHR11680">
    <property type="entry name" value="SERINE HYDROXYMETHYLTRANSFERASE"/>
    <property type="match status" value="1"/>
</dbReference>
<dbReference type="PANTHER" id="PTHR11680:SF35">
    <property type="entry name" value="SERINE HYDROXYMETHYLTRANSFERASE 1"/>
    <property type="match status" value="1"/>
</dbReference>
<dbReference type="Pfam" id="PF00464">
    <property type="entry name" value="SHMT"/>
    <property type="match status" value="2"/>
</dbReference>
<dbReference type="PIRSF" id="PIRSF000412">
    <property type="entry name" value="SHMT"/>
    <property type="match status" value="1"/>
</dbReference>
<dbReference type="SUPFAM" id="SSF53383">
    <property type="entry name" value="PLP-dependent transferases"/>
    <property type="match status" value="1"/>
</dbReference>
<dbReference type="PROSITE" id="PS00096">
    <property type="entry name" value="SHMT"/>
    <property type="match status" value="1"/>
</dbReference>
<name>GLYA_CHLT2</name>
<proteinExistence type="inferred from homology"/>
<gene>
    <name evidence="1" type="primary">glyA</name>
    <name type="ordered locus">CTL0691</name>
</gene>
<sequence>MASLLDRYLRNISDKSQQNLASVAYLASLDHLLHAFPSIGQSIVQELKSQRSRLKMIASENFSSLSVQLAMGNLLTDKYCEGSPFKRFYSCCENVDAIEWECAETAKELFGAESAFVQPHSGADANLLAIMSIITQKIQSPAVQQLGYKTINDLPEQEYEALKAEMAQHKCLGPSLNSGGHLTHGTVRMNIMSKLMHCLPYEVNLDTELFDYDEIAKIAKEHKPTVLIAGYSSYSRRFNFATLKQIAEDCGAVLWVDMAHFAGLVAGGVFVGEENPMPYADIVTTTTHKTLRGPRGGLVLAKKEYANTLNKACPLMMGGPLPHVIAAKAIALKEAMTINFRKYAHKVVENAQTLAEVFQRNGLRLLTGGTDNHMLIIDLTSLGVPGRIAEDMLTSVGIAVNRNTIPSDASGQWKTSGIRLGTPALTTLGMGSAEMEEVANIIVKVLRNITVRSNAESGSSKSEGELSEGIAQEARQRVADLLGRFPLYPEIDLETLV</sequence>
<organism>
    <name type="scientific">Chlamydia trachomatis serovar L2 (strain ATCC VR-902B / DSM 19102 / 434/Bu)</name>
    <dbReference type="NCBI Taxonomy" id="471472"/>
    <lineage>
        <taxon>Bacteria</taxon>
        <taxon>Pseudomonadati</taxon>
        <taxon>Chlamydiota</taxon>
        <taxon>Chlamydiia</taxon>
        <taxon>Chlamydiales</taxon>
        <taxon>Chlamydiaceae</taxon>
        <taxon>Chlamydia/Chlamydophila group</taxon>
        <taxon>Chlamydia</taxon>
    </lineage>
</organism>